<comment type="function">
    <text evidence="2">Involved in multiple sites RNA editing events in chloroplasts. Involved in the editing of the site 7 of ndhB (ndhB-7) and site 5 of ndhD (ndhD-5) transcripts, which are two plastid-encoded subunits of the chloroplast NAD(P)H dehydrogenase (NDH) complex. Involved in the editing of the site 3 of rpoB (rpoB-3) transcript. Required for the activity of the NDH complex of the photosynthetic electron transport chain. Possesses low endoribonuclease activity in vitro.</text>
</comment>
<comment type="subcellular location">
    <subcellularLocation>
        <location evidence="1">Plastid</location>
        <location evidence="1">Chloroplast</location>
    </subcellularLocation>
</comment>
<comment type="disruption phenotype">
    <text evidence="2">Impaired chloroplastic NAD(P)H dehydrogenase (NDH) activity.</text>
</comment>
<comment type="miscellaneous">
    <text evidence="2">The DYW motif is dispensable for editing activity in vivo.</text>
</comment>
<comment type="similarity">
    <text evidence="4">Belongs to the PPR family. PCMP-H subfamily.</text>
</comment>
<comment type="online information" name="Pentatricopeptide repeat proteins">
    <link uri="https://ppr.plantenergy.uwa.edu.au"/>
</comment>
<dbReference type="EMBL" id="AC007259">
    <property type="status" value="NOT_ANNOTATED_CDS"/>
    <property type="molecule type" value="Genomic_DNA"/>
</dbReference>
<dbReference type="EMBL" id="CP002684">
    <property type="protein sequence ID" value="AEE28713.1"/>
    <property type="molecule type" value="Genomic_DNA"/>
</dbReference>
<dbReference type="RefSeq" id="NP_172596.1">
    <property type="nucleotide sequence ID" value="NM_101002.2"/>
</dbReference>
<dbReference type="SMR" id="Q3E6Q1"/>
<dbReference type="FunCoup" id="Q3E6Q1">
    <property type="interactions" value="335"/>
</dbReference>
<dbReference type="STRING" id="3702.Q3E6Q1"/>
<dbReference type="PaxDb" id="3702-AT1G11290.1"/>
<dbReference type="ProteomicsDB" id="234859"/>
<dbReference type="EnsemblPlants" id="AT1G11290.1">
    <property type="protein sequence ID" value="AT1G11290.1"/>
    <property type="gene ID" value="AT1G11290"/>
</dbReference>
<dbReference type="GeneID" id="837671"/>
<dbReference type="Gramene" id="AT1G11290.1">
    <property type="protein sequence ID" value="AT1G11290.1"/>
    <property type="gene ID" value="AT1G11290"/>
</dbReference>
<dbReference type="KEGG" id="ath:AT1G11290"/>
<dbReference type="Araport" id="AT1G11290"/>
<dbReference type="TAIR" id="AT1G11290">
    <property type="gene designation" value="CRR22"/>
</dbReference>
<dbReference type="eggNOG" id="KOG4197">
    <property type="taxonomic scope" value="Eukaryota"/>
</dbReference>
<dbReference type="HOGENOM" id="CLU_002706_15_0_1"/>
<dbReference type="InParanoid" id="Q3E6Q1"/>
<dbReference type="OMA" id="RLNEAWD"/>
<dbReference type="PhylomeDB" id="Q3E6Q1"/>
<dbReference type="PRO" id="PR:Q3E6Q1"/>
<dbReference type="Proteomes" id="UP000006548">
    <property type="component" value="Chromosome 1"/>
</dbReference>
<dbReference type="ExpressionAtlas" id="Q3E6Q1">
    <property type="expression patterns" value="baseline and differential"/>
</dbReference>
<dbReference type="GO" id="GO:0009507">
    <property type="term" value="C:chloroplast"/>
    <property type="evidence" value="ECO:0000314"/>
    <property type="project" value="TAIR"/>
</dbReference>
<dbReference type="GO" id="GO:0004519">
    <property type="term" value="F:endonuclease activity"/>
    <property type="evidence" value="ECO:0000314"/>
    <property type="project" value="TAIR"/>
</dbReference>
<dbReference type="GO" id="GO:0003729">
    <property type="term" value="F:mRNA binding"/>
    <property type="evidence" value="ECO:0000314"/>
    <property type="project" value="TAIR"/>
</dbReference>
<dbReference type="GO" id="GO:0008270">
    <property type="term" value="F:zinc ion binding"/>
    <property type="evidence" value="ECO:0007669"/>
    <property type="project" value="InterPro"/>
</dbReference>
<dbReference type="GO" id="GO:0016556">
    <property type="term" value="P:mRNA modification"/>
    <property type="evidence" value="ECO:0000315"/>
    <property type="project" value="TAIR"/>
</dbReference>
<dbReference type="GO" id="GO:0006397">
    <property type="term" value="P:mRNA processing"/>
    <property type="evidence" value="ECO:0007669"/>
    <property type="project" value="UniProtKB-KW"/>
</dbReference>
<dbReference type="FunFam" id="1.25.40.10:FF:001326">
    <property type="entry name" value="Pentatricopeptide repeat-containing protein"/>
    <property type="match status" value="1"/>
</dbReference>
<dbReference type="FunFam" id="1.25.40.10:FF:001707">
    <property type="entry name" value="Pentatricopeptide repeat-containing protein At1g11290, chloroplastic"/>
    <property type="match status" value="1"/>
</dbReference>
<dbReference type="FunFam" id="1.25.40.10:FF:000395">
    <property type="entry name" value="Pentatricopeptide repeat-containing protein chloroplastic"/>
    <property type="match status" value="1"/>
</dbReference>
<dbReference type="FunFam" id="1.25.40.10:FF:000031">
    <property type="entry name" value="Pentatricopeptide repeat-containing protein mitochondrial"/>
    <property type="match status" value="1"/>
</dbReference>
<dbReference type="FunFam" id="1.25.40.10:FF:002415">
    <property type="entry name" value="Uncharacterized protein"/>
    <property type="match status" value="1"/>
</dbReference>
<dbReference type="Gene3D" id="1.25.40.10">
    <property type="entry name" value="Tetratricopeptide repeat domain"/>
    <property type="match status" value="5"/>
</dbReference>
<dbReference type="InterPro" id="IPR032867">
    <property type="entry name" value="DYW_dom"/>
</dbReference>
<dbReference type="InterPro" id="IPR046848">
    <property type="entry name" value="E_motif"/>
</dbReference>
<dbReference type="InterPro" id="IPR002885">
    <property type="entry name" value="Pentatricopeptide_rpt"/>
</dbReference>
<dbReference type="InterPro" id="IPR046960">
    <property type="entry name" value="PPR_At4g14850-like_plant"/>
</dbReference>
<dbReference type="InterPro" id="IPR011990">
    <property type="entry name" value="TPR-like_helical_dom_sf"/>
</dbReference>
<dbReference type="NCBIfam" id="TIGR00756">
    <property type="entry name" value="PPR"/>
    <property type="match status" value="7"/>
</dbReference>
<dbReference type="PANTHER" id="PTHR47926">
    <property type="entry name" value="PENTATRICOPEPTIDE REPEAT-CONTAINING PROTEIN"/>
    <property type="match status" value="1"/>
</dbReference>
<dbReference type="PANTHER" id="PTHR47926:SF373">
    <property type="entry name" value="TETRATRICOPEPTIDE-LIKE HELICAL DOMAIN SUPERFAMILY, DYW DOMAIN-CONTAINING PROTEIN"/>
    <property type="match status" value="1"/>
</dbReference>
<dbReference type="Pfam" id="PF14432">
    <property type="entry name" value="DYW_deaminase"/>
    <property type="match status" value="1"/>
</dbReference>
<dbReference type="Pfam" id="PF20431">
    <property type="entry name" value="E_motif"/>
    <property type="match status" value="1"/>
</dbReference>
<dbReference type="Pfam" id="PF01535">
    <property type="entry name" value="PPR"/>
    <property type="match status" value="4"/>
</dbReference>
<dbReference type="Pfam" id="PF13041">
    <property type="entry name" value="PPR_2"/>
    <property type="match status" value="3"/>
</dbReference>
<dbReference type="Pfam" id="PF13812">
    <property type="entry name" value="PPR_3"/>
    <property type="match status" value="1"/>
</dbReference>
<dbReference type="SUPFAM" id="SSF48452">
    <property type="entry name" value="TPR-like"/>
    <property type="match status" value="1"/>
</dbReference>
<dbReference type="PROSITE" id="PS51375">
    <property type="entry name" value="PPR"/>
    <property type="match status" value="15"/>
</dbReference>
<name>PPR32_ARATH</name>
<sequence>MSSQLVQFSTVPQIPNPPSRHRHFLSERNYIPANVYEHPAALLLERCSSLKELRQILPLVFKNGLYQEHFFQTKLVSLFCRYGSVDEAARVFEPIDSKLNVLYHTMLKGFAKVSDLDKALQFFVRMRYDDVEPVVYNFTYLLKVCGDEAELRVGKEIHGLLVKSGFSLDLFAMTGLENMYAKCRQVNEARKVFDRMPERDLVSWNTIVAGYSQNGMARMALEMVKSMCEENLKPSFITIVSVLPAVSALRLISVGKEIHGYAMRSGFDSLVNISTALVDMYAKCGSLETARQLFDGMLERNVVSWNSMIDAYVQNENPKEAMLIFQKMLDEGVKPTDVSVMGALHACADLGDLERGRFIHKLSVELGLDRNVSVVNSLISMYCKCKEVDTAASMFGKLQSRTLVSWNAMILGFAQNGRPIDALNYFSQMRSRTVKPDTFTYVSVITAIAELSITHHAKWIHGVVMRSCLDKNVFVTTALVDMYAKCGAIMIARLIFDMMSERHVTTWNAMIDGYGTHGFGKAALELFEEMQKGTIKPNGVTFLSVISACSHSGLVEAGLKCFYMMKENYSIELSMDHYGAMVDLLGRAGRLNEAWDFIMQMPVKPAVNVYGAMLGACQIHKNVNFAEKAAERLFELNPDDGGYHVLLANIYRAASMWEKVGQVRVSMLRQGLRKTPGCSMVEIKNEVHSFFSGSTAHPDSKKIYAFLEKLICHIKEAGYVPDTNLVLGVENDVKEQLLSTHSEKLAISFGLLNTTAGTTIHVRKNLRVCADCHNATKYISLVTGREIVVRDMQRFHHFKNGACSCGDYW</sequence>
<reference key="1">
    <citation type="journal article" date="2000" name="Nature">
        <title>Sequence and analysis of chromosome 1 of the plant Arabidopsis thaliana.</title>
        <authorList>
            <person name="Theologis A."/>
            <person name="Ecker J.R."/>
            <person name="Palm C.J."/>
            <person name="Federspiel N.A."/>
            <person name="Kaul S."/>
            <person name="White O."/>
            <person name="Alonso J."/>
            <person name="Altafi H."/>
            <person name="Araujo R."/>
            <person name="Bowman C.L."/>
            <person name="Brooks S.Y."/>
            <person name="Buehler E."/>
            <person name="Chan A."/>
            <person name="Chao Q."/>
            <person name="Chen H."/>
            <person name="Cheuk R.F."/>
            <person name="Chin C.W."/>
            <person name="Chung M.K."/>
            <person name="Conn L."/>
            <person name="Conway A.B."/>
            <person name="Conway A.R."/>
            <person name="Creasy T.H."/>
            <person name="Dewar K."/>
            <person name="Dunn P."/>
            <person name="Etgu P."/>
            <person name="Feldblyum T.V."/>
            <person name="Feng J.-D."/>
            <person name="Fong B."/>
            <person name="Fujii C.Y."/>
            <person name="Gill J.E."/>
            <person name="Goldsmith A.D."/>
            <person name="Haas B."/>
            <person name="Hansen N.F."/>
            <person name="Hughes B."/>
            <person name="Huizar L."/>
            <person name="Hunter J.L."/>
            <person name="Jenkins J."/>
            <person name="Johnson-Hopson C."/>
            <person name="Khan S."/>
            <person name="Khaykin E."/>
            <person name="Kim C.J."/>
            <person name="Koo H.L."/>
            <person name="Kremenetskaia I."/>
            <person name="Kurtz D.B."/>
            <person name="Kwan A."/>
            <person name="Lam B."/>
            <person name="Langin-Hooper S."/>
            <person name="Lee A."/>
            <person name="Lee J.M."/>
            <person name="Lenz C.A."/>
            <person name="Li J.H."/>
            <person name="Li Y.-P."/>
            <person name="Lin X."/>
            <person name="Liu S.X."/>
            <person name="Liu Z.A."/>
            <person name="Luros J.S."/>
            <person name="Maiti R."/>
            <person name="Marziali A."/>
            <person name="Militscher J."/>
            <person name="Miranda M."/>
            <person name="Nguyen M."/>
            <person name="Nierman W.C."/>
            <person name="Osborne B.I."/>
            <person name="Pai G."/>
            <person name="Peterson J."/>
            <person name="Pham P.K."/>
            <person name="Rizzo M."/>
            <person name="Rooney T."/>
            <person name="Rowley D."/>
            <person name="Sakano H."/>
            <person name="Salzberg S.L."/>
            <person name="Schwartz J.R."/>
            <person name="Shinn P."/>
            <person name="Southwick A.M."/>
            <person name="Sun H."/>
            <person name="Tallon L.J."/>
            <person name="Tambunga G."/>
            <person name="Toriumi M.J."/>
            <person name="Town C.D."/>
            <person name="Utterback T."/>
            <person name="Van Aken S."/>
            <person name="Vaysberg M."/>
            <person name="Vysotskaia V.S."/>
            <person name="Walker M."/>
            <person name="Wu D."/>
            <person name="Yu G."/>
            <person name="Fraser C.M."/>
            <person name="Venter J.C."/>
            <person name="Davis R.W."/>
        </authorList>
    </citation>
    <scope>NUCLEOTIDE SEQUENCE [LARGE SCALE GENOMIC DNA]</scope>
    <source>
        <strain>cv. Columbia</strain>
    </source>
</reference>
<reference key="2">
    <citation type="journal article" date="2017" name="Plant J.">
        <title>Araport11: a complete reannotation of the Arabidopsis thaliana reference genome.</title>
        <authorList>
            <person name="Cheng C.Y."/>
            <person name="Krishnakumar V."/>
            <person name="Chan A.P."/>
            <person name="Thibaud-Nissen F."/>
            <person name="Schobel S."/>
            <person name="Town C.D."/>
        </authorList>
    </citation>
    <scope>GENOME REANNOTATION</scope>
    <source>
        <strain>cv. Columbia</strain>
    </source>
</reference>
<reference key="3">
    <citation type="journal article" date="2000" name="Plant Mol. Biol.">
        <title>In Arabidopsis thaliana, 1% of the genome codes for a novel protein family unique to plants.</title>
        <authorList>
            <person name="Aubourg S."/>
            <person name="Boudet N."/>
            <person name="Kreis M."/>
            <person name="Lecharny A."/>
        </authorList>
    </citation>
    <scope>GENE FAMILY</scope>
</reference>
<reference key="4">
    <citation type="journal article" date="2004" name="Plant Cell">
        <title>Genome-wide analysis of Arabidopsis pentatricopeptide repeat proteins reveals their essential role in organelle biogenesis.</title>
        <authorList>
            <person name="Lurin C."/>
            <person name="Andres C."/>
            <person name="Aubourg S."/>
            <person name="Bellaoui M."/>
            <person name="Bitton F."/>
            <person name="Bruyere C."/>
            <person name="Caboche M."/>
            <person name="Debast C."/>
            <person name="Gualberto J."/>
            <person name="Hoffmann B."/>
            <person name="Lecharny A."/>
            <person name="Le Ret M."/>
            <person name="Martin-Magniette M.-L."/>
            <person name="Mireau H."/>
            <person name="Peeters N."/>
            <person name="Renou J.-P."/>
            <person name="Szurek B."/>
            <person name="Taconnat L."/>
            <person name="Small I."/>
        </authorList>
    </citation>
    <scope>GENE FAMILY</scope>
</reference>
<reference key="5">
    <citation type="journal article" date="2009" name="Plant Cell">
        <title>Pentatricopeptide repeat proteins with the DYW motif have distinct molecular functions in RNA editing and RNA cleavage in Arabidopsis chloroplasts.</title>
        <authorList>
            <person name="Okuda K."/>
            <person name="Chateigner-Boutin A.L."/>
            <person name="Nakamura T."/>
            <person name="Delannoy E."/>
            <person name="Sugita M."/>
            <person name="Myouga F."/>
            <person name="Motohashi R."/>
            <person name="Shinozaki K."/>
            <person name="Small I."/>
            <person name="Shikanai T."/>
        </authorList>
    </citation>
    <scope>FUNCTION</scope>
    <scope>DISRUPTION PHENOTYPE</scope>
</reference>
<keyword id="KW-0150">Chloroplast</keyword>
<keyword id="KW-0507">mRNA processing</keyword>
<keyword id="KW-0934">Plastid</keyword>
<keyword id="KW-1185">Reference proteome</keyword>
<keyword id="KW-0677">Repeat</keyword>
<keyword id="KW-0809">Transit peptide</keyword>
<protein>
    <recommendedName>
        <fullName evidence="4">Pentatricopeptide repeat-containing protein At1g11290, chloroplastic</fullName>
    </recommendedName>
    <alternativeName>
        <fullName evidence="3">Protein CHLORORESPIRATORY REDUCTION 22</fullName>
    </alternativeName>
</protein>
<gene>
    <name type="primary">PCMP-H40</name>
    <name evidence="3" type="synonym">CRR22</name>
    <name type="synonym">PCMP-H72</name>
    <name type="ordered locus">At1g11290</name>
    <name type="ORF">T28P6.20</name>
</gene>
<accession>Q3E6Q1</accession>
<feature type="transit peptide" description="Chloroplast" evidence="1">
    <location>
        <begin position="1"/>
        <end position="46"/>
    </location>
</feature>
<feature type="chain" id="PRO_0000342773" description="Pentatricopeptide repeat-containing protein At1g11290, chloroplastic" evidence="1">
    <location>
        <begin position="47"/>
        <end position="809"/>
    </location>
</feature>
<feature type="repeat" description="PPR 1">
    <location>
        <begin position="68"/>
        <end position="98"/>
    </location>
</feature>
<feature type="repeat" description="PPR 2">
    <location>
        <begin position="99"/>
        <end position="133"/>
    </location>
</feature>
<feature type="repeat" description="PPR 3">
    <location>
        <begin position="134"/>
        <end position="168"/>
    </location>
</feature>
<feature type="repeat" description="PPR 4">
    <location>
        <begin position="169"/>
        <end position="199"/>
    </location>
</feature>
<feature type="repeat" description="PPR 5">
    <location>
        <begin position="200"/>
        <end position="234"/>
    </location>
</feature>
<feature type="repeat" description="PPR 6">
    <location>
        <begin position="235"/>
        <end position="269"/>
    </location>
</feature>
<feature type="repeat" description="PPR 7">
    <location>
        <begin position="270"/>
        <end position="300"/>
    </location>
</feature>
<feature type="repeat" description="PPR 8">
    <location>
        <begin position="301"/>
        <end position="335"/>
    </location>
</feature>
<feature type="repeat" description="PPR 9">
    <location>
        <begin position="336"/>
        <end position="370"/>
    </location>
</feature>
<feature type="repeat" description="PPR 10">
    <location>
        <begin position="371"/>
        <end position="401"/>
    </location>
</feature>
<feature type="repeat" description="PPR 11">
    <location>
        <begin position="402"/>
        <end position="436"/>
    </location>
</feature>
<feature type="repeat" description="PPR 12">
    <location>
        <begin position="437"/>
        <end position="471"/>
    </location>
</feature>
<feature type="repeat" description="PPR 13">
    <location>
        <begin position="472"/>
        <end position="502"/>
    </location>
</feature>
<feature type="repeat" description="PPR 14">
    <location>
        <begin position="503"/>
        <end position="537"/>
    </location>
</feature>
<feature type="repeat" description="PPR 15">
    <location>
        <begin position="538"/>
        <end position="568"/>
    </location>
</feature>
<feature type="repeat" description="PPR 16">
    <location>
        <begin position="574"/>
        <end position="604"/>
    </location>
</feature>
<feature type="region of interest" description="Type E motif">
    <location>
        <begin position="609"/>
        <end position="684"/>
    </location>
</feature>
<feature type="region of interest" description="Type E(+) motif">
    <location>
        <begin position="685"/>
        <end position="715"/>
    </location>
</feature>
<feature type="region of interest" description="Type DYW motif">
    <location>
        <begin position="716"/>
        <end position="809"/>
    </location>
</feature>
<proteinExistence type="evidence at transcript level"/>
<evidence type="ECO:0000255" key="1"/>
<evidence type="ECO:0000269" key="2">
    <source>
    </source>
</evidence>
<evidence type="ECO:0000303" key="3">
    <source>
    </source>
</evidence>
<evidence type="ECO:0000305" key="4"/>
<organism>
    <name type="scientific">Arabidopsis thaliana</name>
    <name type="common">Mouse-ear cress</name>
    <dbReference type="NCBI Taxonomy" id="3702"/>
    <lineage>
        <taxon>Eukaryota</taxon>
        <taxon>Viridiplantae</taxon>
        <taxon>Streptophyta</taxon>
        <taxon>Embryophyta</taxon>
        <taxon>Tracheophyta</taxon>
        <taxon>Spermatophyta</taxon>
        <taxon>Magnoliopsida</taxon>
        <taxon>eudicotyledons</taxon>
        <taxon>Gunneridae</taxon>
        <taxon>Pentapetalae</taxon>
        <taxon>rosids</taxon>
        <taxon>malvids</taxon>
        <taxon>Brassicales</taxon>
        <taxon>Brassicaceae</taxon>
        <taxon>Camelineae</taxon>
        <taxon>Arabidopsis</taxon>
    </lineage>
</organism>